<accession>P0C7T8</accession>
<name>TM253_HUMAN</name>
<evidence type="ECO:0000255" key="1"/>
<evidence type="ECO:0000256" key="2">
    <source>
        <dbReference type="SAM" id="MobiDB-lite"/>
    </source>
</evidence>
<evidence type="ECO:0000305" key="3"/>
<sequence>MEDRAGEQEQERHSLRLEKLQHWARHRQSGHLLVLAVSQLWLAVVVVPLAVSVACLNSDCHMATALPLGPGASGLLTGTVTLELRRAPRLWKVRAMMIFNTFNLILGFIVVVVEVMKTALGPAPTASSQHAGLLVLELSAEAFTLGGVLVSVHALFLLSQRKPGCCRSQSLHYQELQEGFSELEEVPGLENGPTVASTGANERVGQREQTRAALLPP</sequence>
<proteinExistence type="evidence at protein level"/>
<organism>
    <name type="scientific">Homo sapiens</name>
    <name type="common">Human</name>
    <dbReference type="NCBI Taxonomy" id="9606"/>
    <lineage>
        <taxon>Eukaryota</taxon>
        <taxon>Metazoa</taxon>
        <taxon>Chordata</taxon>
        <taxon>Craniata</taxon>
        <taxon>Vertebrata</taxon>
        <taxon>Euteleostomi</taxon>
        <taxon>Mammalia</taxon>
        <taxon>Eutheria</taxon>
        <taxon>Euarchontoglires</taxon>
        <taxon>Primates</taxon>
        <taxon>Haplorrhini</taxon>
        <taxon>Catarrhini</taxon>
        <taxon>Hominidae</taxon>
        <taxon>Homo</taxon>
    </lineage>
</organism>
<dbReference type="EMBL" id="AL161668">
    <property type="status" value="NOT_ANNOTATED_CDS"/>
    <property type="molecule type" value="Genomic_DNA"/>
</dbReference>
<dbReference type="CCDS" id="CCDS53884.1"/>
<dbReference type="RefSeq" id="NP_001140155.1">
    <property type="nucleotide sequence ID" value="NM_001146683.2"/>
</dbReference>
<dbReference type="RefSeq" id="NP_001382396.1">
    <property type="nucleotide sequence ID" value="NM_001395467.1"/>
</dbReference>
<dbReference type="RefSeq" id="XP_006720296.1">
    <property type="nucleotide sequence ID" value="XM_006720233.3"/>
</dbReference>
<dbReference type="RefSeq" id="XP_011535380.1">
    <property type="nucleotide sequence ID" value="XM_011537078.3"/>
</dbReference>
<dbReference type="RefSeq" id="XP_011535381.1">
    <property type="nucleotide sequence ID" value="XM_011537079.3"/>
</dbReference>
<dbReference type="RefSeq" id="XP_054232562.1">
    <property type="nucleotide sequence ID" value="XM_054376587.1"/>
</dbReference>
<dbReference type="RefSeq" id="XP_054232563.1">
    <property type="nucleotide sequence ID" value="XM_054376588.1"/>
</dbReference>
<dbReference type="SMR" id="P0C7T8"/>
<dbReference type="BioGRID" id="568735">
    <property type="interactions" value="2"/>
</dbReference>
<dbReference type="FunCoup" id="P0C7T8">
    <property type="interactions" value="21"/>
</dbReference>
<dbReference type="IntAct" id="P0C7T8">
    <property type="interactions" value="2"/>
</dbReference>
<dbReference type="STRING" id="9606.ENSP00000453962"/>
<dbReference type="GlyGen" id="P0C7T8">
    <property type="glycosylation" value="2 sites"/>
</dbReference>
<dbReference type="PhosphoSitePlus" id="P0C7T8"/>
<dbReference type="BioMuta" id="TMEM253"/>
<dbReference type="DMDM" id="206557836"/>
<dbReference type="MassIVE" id="P0C7T8"/>
<dbReference type="PaxDb" id="9606-ENSP00000453962"/>
<dbReference type="PeptideAtlas" id="P0C7T8"/>
<dbReference type="ProteomicsDB" id="52367"/>
<dbReference type="Antibodypedia" id="62200">
    <property type="antibodies" value="8 antibodies from 4 providers"/>
</dbReference>
<dbReference type="DNASU" id="643382"/>
<dbReference type="Ensembl" id="ENST00000418511.6">
    <property type="protein sequence ID" value="ENSP00000453962.1"/>
    <property type="gene ID" value="ENSG00000232070.9"/>
</dbReference>
<dbReference type="Ensembl" id="ENST00000556585.3">
    <property type="protein sequence ID" value="ENSP00000451229.2"/>
    <property type="gene ID" value="ENSG00000232070.9"/>
</dbReference>
<dbReference type="GeneID" id="643382"/>
<dbReference type="KEGG" id="hsa:643382"/>
<dbReference type="MANE-Select" id="ENST00000556585.3">
    <property type="protein sequence ID" value="ENSP00000451229.2"/>
    <property type="RefSeq nucleotide sequence ID" value="NM_001395467.1"/>
    <property type="RefSeq protein sequence ID" value="NP_001382396.1"/>
</dbReference>
<dbReference type="UCSC" id="uc010tlo.2">
    <property type="organism name" value="human"/>
</dbReference>
<dbReference type="AGR" id="HGNC:32545"/>
<dbReference type="CTD" id="643382"/>
<dbReference type="GeneCards" id="TMEM253"/>
<dbReference type="HGNC" id="HGNC:32545">
    <property type="gene designation" value="TMEM253"/>
</dbReference>
<dbReference type="HPA" id="ENSG00000232070">
    <property type="expression patterns" value="Tissue enriched (intestine)"/>
</dbReference>
<dbReference type="neXtProt" id="NX_P0C7T8"/>
<dbReference type="OpenTargets" id="ENSG00000232070"/>
<dbReference type="PharmGKB" id="PA143485392"/>
<dbReference type="VEuPathDB" id="HostDB:ENSG00000232070"/>
<dbReference type="eggNOG" id="ENOG502S0TM">
    <property type="taxonomic scope" value="Eukaryota"/>
</dbReference>
<dbReference type="GeneTree" id="ENSGT00400000023212"/>
<dbReference type="HOGENOM" id="CLU_1405518_0_0_1"/>
<dbReference type="InParanoid" id="P0C7T8"/>
<dbReference type="OMA" id="PRLWKVQ"/>
<dbReference type="OrthoDB" id="9449006at2759"/>
<dbReference type="PAN-GO" id="P0C7T8">
    <property type="GO annotations" value="0 GO annotations based on evolutionary models"/>
</dbReference>
<dbReference type="PhylomeDB" id="P0C7T8"/>
<dbReference type="TreeFam" id="TF354003"/>
<dbReference type="PathwayCommons" id="P0C7T8"/>
<dbReference type="SignaLink" id="P0C7T8"/>
<dbReference type="BioGRID-ORCS" id="643382">
    <property type="hits" value="12 hits in 1152 CRISPR screens"/>
</dbReference>
<dbReference type="GenomeRNAi" id="643382"/>
<dbReference type="Pharos" id="P0C7T8">
    <property type="development level" value="Tdark"/>
</dbReference>
<dbReference type="PRO" id="PR:P0C7T8"/>
<dbReference type="Proteomes" id="UP000005640">
    <property type="component" value="Chromosome 14"/>
</dbReference>
<dbReference type="RNAct" id="P0C7T8">
    <property type="molecule type" value="protein"/>
</dbReference>
<dbReference type="Bgee" id="ENSG00000232070">
    <property type="expression patterns" value="Expressed in duodenum and 96 other cell types or tissues"/>
</dbReference>
<dbReference type="ExpressionAtlas" id="P0C7T8">
    <property type="expression patterns" value="baseline and differential"/>
</dbReference>
<dbReference type="GO" id="GO:0016020">
    <property type="term" value="C:membrane"/>
    <property type="evidence" value="ECO:0007669"/>
    <property type="project" value="UniProtKB-SubCell"/>
</dbReference>
<dbReference type="InterPro" id="IPR038874">
    <property type="entry name" value="TMEM253"/>
</dbReference>
<dbReference type="PANTHER" id="PTHR37359">
    <property type="entry name" value="TRANSMEMBRANE PROTEIN 253"/>
    <property type="match status" value="1"/>
</dbReference>
<dbReference type="PANTHER" id="PTHR37359:SF1">
    <property type="entry name" value="TRANSMEMBRANE PROTEIN 253"/>
    <property type="match status" value="1"/>
</dbReference>
<keyword id="KW-0472">Membrane</keyword>
<keyword id="KW-1267">Proteomics identification</keyword>
<keyword id="KW-1185">Reference proteome</keyword>
<keyword id="KW-0812">Transmembrane</keyword>
<keyword id="KW-1133">Transmembrane helix</keyword>
<feature type="chain" id="PRO_0000343722" description="Transmembrane protein 253">
    <location>
        <begin position="1"/>
        <end position="217"/>
    </location>
</feature>
<feature type="transmembrane region" description="Helical" evidence="1">
    <location>
        <begin position="33"/>
        <end position="53"/>
    </location>
</feature>
<feature type="transmembrane region" description="Helical" evidence="1">
    <location>
        <begin position="62"/>
        <end position="82"/>
    </location>
</feature>
<feature type="transmembrane region" description="Helical" evidence="1">
    <location>
        <begin position="96"/>
        <end position="116"/>
    </location>
</feature>
<feature type="transmembrane region" description="Helical" evidence="1">
    <location>
        <begin position="138"/>
        <end position="158"/>
    </location>
</feature>
<feature type="region of interest" description="Disordered" evidence="2">
    <location>
        <begin position="187"/>
        <end position="217"/>
    </location>
</feature>
<reference key="1">
    <citation type="journal article" date="2003" name="Nature">
        <title>The DNA sequence and analysis of human chromosome 14.</title>
        <authorList>
            <person name="Heilig R."/>
            <person name="Eckenberg R."/>
            <person name="Petit J.-L."/>
            <person name="Fonknechten N."/>
            <person name="Da Silva C."/>
            <person name="Cattolico L."/>
            <person name="Levy M."/>
            <person name="Barbe V."/>
            <person name="De Berardinis V."/>
            <person name="Ureta-Vidal A."/>
            <person name="Pelletier E."/>
            <person name="Vico V."/>
            <person name="Anthouard V."/>
            <person name="Rowen L."/>
            <person name="Madan A."/>
            <person name="Qin S."/>
            <person name="Sun H."/>
            <person name="Du H."/>
            <person name="Pepin K."/>
            <person name="Artiguenave F."/>
            <person name="Robert C."/>
            <person name="Cruaud C."/>
            <person name="Bruels T."/>
            <person name="Jaillon O."/>
            <person name="Friedlander L."/>
            <person name="Samson G."/>
            <person name="Brottier P."/>
            <person name="Cure S."/>
            <person name="Segurens B."/>
            <person name="Aniere F."/>
            <person name="Samain S."/>
            <person name="Crespeau H."/>
            <person name="Abbasi N."/>
            <person name="Aiach N."/>
            <person name="Boscus D."/>
            <person name="Dickhoff R."/>
            <person name="Dors M."/>
            <person name="Dubois I."/>
            <person name="Friedman C."/>
            <person name="Gouyvenoux M."/>
            <person name="James R."/>
            <person name="Madan A."/>
            <person name="Mairey-Estrada B."/>
            <person name="Mangenot S."/>
            <person name="Martins N."/>
            <person name="Menard M."/>
            <person name="Oztas S."/>
            <person name="Ratcliffe A."/>
            <person name="Shaffer T."/>
            <person name="Trask B."/>
            <person name="Vacherie B."/>
            <person name="Bellemere C."/>
            <person name="Belser C."/>
            <person name="Besnard-Gonnet M."/>
            <person name="Bartol-Mavel D."/>
            <person name="Boutard M."/>
            <person name="Briez-Silla S."/>
            <person name="Combette S."/>
            <person name="Dufosse-Laurent V."/>
            <person name="Ferron C."/>
            <person name="Lechaplais C."/>
            <person name="Louesse C."/>
            <person name="Muselet D."/>
            <person name="Magdelenat G."/>
            <person name="Pateau E."/>
            <person name="Petit E."/>
            <person name="Sirvain-Trukniewicz P."/>
            <person name="Trybou A."/>
            <person name="Vega-Czarny N."/>
            <person name="Bataille E."/>
            <person name="Bluet E."/>
            <person name="Bordelais I."/>
            <person name="Dubois M."/>
            <person name="Dumont C."/>
            <person name="Guerin T."/>
            <person name="Haffray S."/>
            <person name="Hammadi R."/>
            <person name="Muanga J."/>
            <person name="Pellouin V."/>
            <person name="Robert D."/>
            <person name="Wunderle E."/>
            <person name="Gauguet G."/>
            <person name="Roy A."/>
            <person name="Sainte-Marthe L."/>
            <person name="Verdier J."/>
            <person name="Verdier-Discala C."/>
            <person name="Hillier L.W."/>
            <person name="Fulton L."/>
            <person name="McPherson J."/>
            <person name="Matsuda F."/>
            <person name="Wilson R."/>
            <person name="Scarpelli C."/>
            <person name="Gyapay G."/>
            <person name="Wincker P."/>
            <person name="Saurin W."/>
            <person name="Quetier F."/>
            <person name="Waterston R."/>
            <person name="Hood L."/>
            <person name="Weissenbach J."/>
        </authorList>
    </citation>
    <scope>NUCLEOTIDE SEQUENCE [LARGE SCALE GENOMIC DNA]</scope>
</reference>
<protein>
    <recommendedName>
        <fullName>Transmembrane protein 253</fullName>
    </recommendedName>
</protein>
<gene>
    <name type="primary">TMEM253</name>
    <name type="synonym">C14orf176</name>
    <name type="synonym">C14orf95</name>
</gene>
<comment type="subcellular location">
    <subcellularLocation>
        <location evidence="3">Membrane</location>
        <topology evidence="3">Multi-pass membrane protein</topology>
    </subcellularLocation>
</comment>